<sequence length="127" mass="14546">MNIRATRVGEQMKKELSDIISRRLKDPRIGFVTVTDVRVTGDLQQAKVYISVLGDDKQRENTLKALEKAKGFIRSEIGQRIRLRKTPEIFFEIDETMEYGSRIEQLIRQISSDDHPAKEADGEPNNG</sequence>
<feature type="chain" id="PRO_0000102665" description="Ribosome-binding factor A">
    <location>
        <begin position="1"/>
        <end position="127"/>
    </location>
</feature>
<protein>
    <recommendedName>
        <fullName evidence="1">Ribosome-binding factor A</fullName>
    </recommendedName>
</protein>
<evidence type="ECO:0000255" key="1">
    <source>
        <dbReference type="HAMAP-Rule" id="MF_00003"/>
    </source>
</evidence>
<evidence type="ECO:0000305" key="2"/>
<gene>
    <name evidence="1" type="primary">rbfA</name>
    <name type="ordered locus">GK1265</name>
</gene>
<name>RBFA_GEOKA</name>
<comment type="function">
    <text evidence="1">One of several proteins that assist in the late maturation steps of the functional core of the 30S ribosomal subunit. Associates with free 30S ribosomal subunits (but not with 30S subunits that are part of 70S ribosomes or polysomes). Required for efficient processing of 16S rRNA. May interact with the 5'-terminal helix region of 16S rRNA.</text>
</comment>
<comment type="subunit">
    <text evidence="1">Monomer. Binds 30S ribosomal subunits, but not 50S ribosomal subunits or 70S ribosomes.</text>
</comment>
<comment type="subcellular location">
    <subcellularLocation>
        <location evidence="1">Cytoplasm</location>
    </subcellularLocation>
</comment>
<comment type="similarity">
    <text evidence="1">Belongs to the RbfA family.</text>
</comment>
<comment type="sequence caution" evidence="2">
    <conflict type="erroneous initiation">
        <sequence resource="EMBL-CDS" id="BAD75550"/>
    </conflict>
    <text>Truncated N-terminus.</text>
</comment>
<dbReference type="EMBL" id="BA000043">
    <property type="protein sequence ID" value="BAD75550.1"/>
    <property type="status" value="ALT_INIT"/>
    <property type="molecule type" value="Genomic_DNA"/>
</dbReference>
<dbReference type="RefSeq" id="WP_011230765.1">
    <property type="nucleotide sequence ID" value="NC_006510.1"/>
</dbReference>
<dbReference type="SMR" id="Q5L0I6"/>
<dbReference type="STRING" id="235909.GK1265"/>
<dbReference type="KEGG" id="gka:GK1265"/>
<dbReference type="PATRIC" id="fig|235909.7.peg.1366"/>
<dbReference type="eggNOG" id="COG0858">
    <property type="taxonomic scope" value="Bacteria"/>
</dbReference>
<dbReference type="HOGENOM" id="CLU_089475_6_3_9"/>
<dbReference type="Proteomes" id="UP000001172">
    <property type="component" value="Chromosome"/>
</dbReference>
<dbReference type="GO" id="GO:0005829">
    <property type="term" value="C:cytosol"/>
    <property type="evidence" value="ECO:0007669"/>
    <property type="project" value="TreeGrafter"/>
</dbReference>
<dbReference type="GO" id="GO:0043024">
    <property type="term" value="F:ribosomal small subunit binding"/>
    <property type="evidence" value="ECO:0007669"/>
    <property type="project" value="TreeGrafter"/>
</dbReference>
<dbReference type="GO" id="GO:0030490">
    <property type="term" value="P:maturation of SSU-rRNA"/>
    <property type="evidence" value="ECO:0007669"/>
    <property type="project" value="UniProtKB-UniRule"/>
</dbReference>
<dbReference type="FunFam" id="3.30.300.20:FF:000009">
    <property type="entry name" value="Ribosome-binding factor A"/>
    <property type="match status" value="1"/>
</dbReference>
<dbReference type="Gene3D" id="3.30.300.20">
    <property type="match status" value="1"/>
</dbReference>
<dbReference type="HAMAP" id="MF_00003">
    <property type="entry name" value="RbfA"/>
    <property type="match status" value="1"/>
</dbReference>
<dbReference type="InterPro" id="IPR015946">
    <property type="entry name" value="KH_dom-like_a/b"/>
</dbReference>
<dbReference type="InterPro" id="IPR000238">
    <property type="entry name" value="RbfA"/>
</dbReference>
<dbReference type="InterPro" id="IPR023799">
    <property type="entry name" value="RbfA_dom_sf"/>
</dbReference>
<dbReference type="InterPro" id="IPR020053">
    <property type="entry name" value="Ribosome-bd_factorA_CS"/>
</dbReference>
<dbReference type="NCBIfam" id="TIGR00082">
    <property type="entry name" value="rbfA"/>
    <property type="match status" value="1"/>
</dbReference>
<dbReference type="PANTHER" id="PTHR33515">
    <property type="entry name" value="RIBOSOME-BINDING FACTOR A, CHLOROPLASTIC-RELATED"/>
    <property type="match status" value="1"/>
</dbReference>
<dbReference type="PANTHER" id="PTHR33515:SF1">
    <property type="entry name" value="RIBOSOME-BINDING FACTOR A, CHLOROPLASTIC-RELATED"/>
    <property type="match status" value="1"/>
</dbReference>
<dbReference type="Pfam" id="PF02033">
    <property type="entry name" value="RBFA"/>
    <property type="match status" value="1"/>
</dbReference>
<dbReference type="SUPFAM" id="SSF89919">
    <property type="entry name" value="Ribosome-binding factor A, RbfA"/>
    <property type="match status" value="1"/>
</dbReference>
<dbReference type="PROSITE" id="PS01319">
    <property type="entry name" value="RBFA"/>
    <property type="match status" value="1"/>
</dbReference>
<proteinExistence type="inferred from homology"/>
<reference key="1">
    <citation type="journal article" date="2004" name="Nucleic Acids Res.">
        <title>Thermoadaptation trait revealed by the genome sequence of thermophilic Geobacillus kaustophilus.</title>
        <authorList>
            <person name="Takami H."/>
            <person name="Takaki Y."/>
            <person name="Chee G.-J."/>
            <person name="Nishi S."/>
            <person name="Shimamura S."/>
            <person name="Suzuki H."/>
            <person name="Matsui S."/>
            <person name="Uchiyama I."/>
        </authorList>
    </citation>
    <scope>NUCLEOTIDE SEQUENCE [LARGE SCALE GENOMIC DNA]</scope>
    <source>
        <strain>HTA426</strain>
    </source>
</reference>
<keyword id="KW-0963">Cytoplasm</keyword>
<keyword id="KW-1185">Reference proteome</keyword>
<keyword id="KW-0690">Ribosome biogenesis</keyword>
<accession>Q5L0I6</accession>
<organism>
    <name type="scientific">Geobacillus kaustophilus (strain HTA426)</name>
    <dbReference type="NCBI Taxonomy" id="235909"/>
    <lineage>
        <taxon>Bacteria</taxon>
        <taxon>Bacillati</taxon>
        <taxon>Bacillota</taxon>
        <taxon>Bacilli</taxon>
        <taxon>Bacillales</taxon>
        <taxon>Anoxybacillaceae</taxon>
        <taxon>Geobacillus</taxon>
        <taxon>Geobacillus thermoleovorans group</taxon>
    </lineage>
</organism>